<accession>Q28QS5</accession>
<keyword id="KW-0285">Flavoprotein</keyword>
<keyword id="KW-0288">FMN</keyword>
<keyword id="KW-0520">NAD</keyword>
<keyword id="KW-0560">Oxidoreductase</keyword>
<keyword id="KW-1185">Reference proteome</keyword>
<feature type="chain" id="PRO_0000245926" description="FMN-dependent NADH:quinone oxidoreductase 2">
    <location>
        <begin position="1"/>
        <end position="204"/>
    </location>
</feature>
<feature type="binding site" evidence="1">
    <location>
        <position position="10"/>
    </location>
    <ligand>
        <name>FMN</name>
        <dbReference type="ChEBI" id="CHEBI:58210"/>
    </ligand>
</feature>
<feature type="binding site" evidence="1">
    <location>
        <begin position="16"/>
        <end position="18"/>
    </location>
    <ligand>
        <name>FMN</name>
        <dbReference type="ChEBI" id="CHEBI:58210"/>
    </ligand>
</feature>
<sequence length="204" mass="21445">MPKLLVVETSPRGAASISRNITKTFVAKWKAAHADSAVVQRDLTGTGLEFVTAPWLEAYFTPPDQHTDAMKQALALSDELVAELLNADELVIGTPVYNYNVPALLKAWIDHIVRKGITLGMDGKGLLTGKKATVLIASGGIYSEGSPIADRAIAPQYLKLILGVIGIENVTIVAGGGAKAVDMGEATMDGFIATLDSELTAAAQ</sequence>
<name>AZOR2_JANSC</name>
<comment type="function">
    <text evidence="1">Quinone reductase that provides resistance to thiol-specific stress caused by electrophilic quinones.</text>
</comment>
<comment type="function">
    <text evidence="1">Also exhibits azoreductase activity. Catalyzes the reductive cleavage of the azo bond in aromatic azo compounds to the corresponding amines.</text>
</comment>
<comment type="catalytic activity">
    <reaction evidence="1">
        <text>2 a quinone + NADH + H(+) = 2 a 1,4-benzosemiquinone + NAD(+)</text>
        <dbReference type="Rhea" id="RHEA:65952"/>
        <dbReference type="ChEBI" id="CHEBI:15378"/>
        <dbReference type="ChEBI" id="CHEBI:57540"/>
        <dbReference type="ChEBI" id="CHEBI:57945"/>
        <dbReference type="ChEBI" id="CHEBI:132124"/>
        <dbReference type="ChEBI" id="CHEBI:134225"/>
    </reaction>
</comment>
<comment type="catalytic activity">
    <reaction evidence="1">
        <text>N,N-dimethyl-1,4-phenylenediamine + anthranilate + 2 NAD(+) = 2-(4-dimethylaminophenyl)diazenylbenzoate + 2 NADH + 2 H(+)</text>
        <dbReference type="Rhea" id="RHEA:55872"/>
        <dbReference type="ChEBI" id="CHEBI:15378"/>
        <dbReference type="ChEBI" id="CHEBI:15783"/>
        <dbReference type="ChEBI" id="CHEBI:16567"/>
        <dbReference type="ChEBI" id="CHEBI:57540"/>
        <dbReference type="ChEBI" id="CHEBI:57945"/>
        <dbReference type="ChEBI" id="CHEBI:71579"/>
        <dbReference type="EC" id="1.7.1.17"/>
    </reaction>
</comment>
<comment type="cofactor">
    <cofactor evidence="1">
        <name>FMN</name>
        <dbReference type="ChEBI" id="CHEBI:58210"/>
    </cofactor>
    <text evidence="1">Binds 1 FMN per subunit.</text>
</comment>
<comment type="subunit">
    <text evidence="1">Homodimer.</text>
</comment>
<comment type="similarity">
    <text evidence="1">Belongs to the azoreductase type 1 family.</text>
</comment>
<gene>
    <name evidence="1" type="primary">azoR2</name>
    <name type="ordered locus">Jann_2020</name>
</gene>
<proteinExistence type="inferred from homology"/>
<dbReference type="EC" id="1.6.5.-" evidence="1"/>
<dbReference type="EC" id="1.7.1.17" evidence="1"/>
<dbReference type="EMBL" id="CP000264">
    <property type="protein sequence ID" value="ABD54937.1"/>
    <property type="molecule type" value="Genomic_DNA"/>
</dbReference>
<dbReference type="RefSeq" id="WP_011455141.1">
    <property type="nucleotide sequence ID" value="NC_007802.1"/>
</dbReference>
<dbReference type="SMR" id="Q28QS5"/>
<dbReference type="STRING" id="290400.Jann_2020"/>
<dbReference type="KEGG" id="jan:Jann_2020"/>
<dbReference type="eggNOG" id="COG1182">
    <property type="taxonomic scope" value="Bacteria"/>
</dbReference>
<dbReference type="HOGENOM" id="CLU_088964_0_0_5"/>
<dbReference type="OrthoDB" id="9787136at2"/>
<dbReference type="Proteomes" id="UP000008326">
    <property type="component" value="Chromosome"/>
</dbReference>
<dbReference type="GO" id="GO:0009055">
    <property type="term" value="F:electron transfer activity"/>
    <property type="evidence" value="ECO:0007669"/>
    <property type="project" value="UniProtKB-UniRule"/>
</dbReference>
<dbReference type="GO" id="GO:0010181">
    <property type="term" value="F:FMN binding"/>
    <property type="evidence" value="ECO:0007669"/>
    <property type="project" value="UniProtKB-UniRule"/>
</dbReference>
<dbReference type="GO" id="GO:0016652">
    <property type="term" value="F:oxidoreductase activity, acting on NAD(P)H as acceptor"/>
    <property type="evidence" value="ECO:0007669"/>
    <property type="project" value="UniProtKB-UniRule"/>
</dbReference>
<dbReference type="GO" id="GO:0016655">
    <property type="term" value="F:oxidoreductase activity, acting on NAD(P)H, quinone or similar compound as acceptor"/>
    <property type="evidence" value="ECO:0007669"/>
    <property type="project" value="InterPro"/>
</dbReference>
<dbReference type="Gene3D" id="3.40.50.360">
    <property type="match status" value="1"/>
</dbReference>
<dbReference type="HAMAP" id="MF_01216">
    <property type="entry name" value="Azoreductase_type1"/>
    <property type="match status" value="1"/>
</dbReference>
<dbReference type="InterPro" id="IPR003680">
    <property type="entry name" value="Flavodoxin_fold"/>
</dbReference>
<dbReference type="InterPro" id="IPR029039">
    <property type="entry name" value="Flavoprotein-like_sf"/>
</dbReference>
<dbReference type="InterPro" id="IPR050104">
    <property type="entry name" value="FMN-dep_NADH:Q_OxRdtase_AzoR1"/>
</dbReference>
<dbReference type="InterPro" id="IPR023048">
    <property type="entry name" value="NADH:quinone_OxRdtase_FMN_depd"/>
</dbReference>
<dbReference type="PANTHER" id="PTHR43741">
    <property type="entry name" value="FMN-DEPENDENT NADH-AZOREDUCTASE 1"/>
    <property type="match status" value="1"/>
</dbReference>
<dbReference type="PANTHER" id="PTHR43741:SF2">
    <property type="entry name" value="FMN-DEPENDENT NADH:QUINONE OXIDOREDUCTASE"/>
    <property type="match status" value="1"/>
</dbReference>
<dbReference type="Pfam" id="PF02525">
    <property type="entry name" value="Flavodoxin_2"/>
    <property type="match status" value="1"/>
</dbReference>
<dbReference type="SUPFAM" id="SSF52218">
    <property type="entry name" value="Flavoproteins"/>
    <property type="match status" value="1"/>
</dbReference>
<evidence type="ECO:0000255" key="1">
    <source>
        <dbReference type="HAMAP-Rule" id="MF_01216"/>
    </source>
</evidence>
<reference key="1">
    <citation type="submission" date="2006-02" db="EMBL/GenBank/DDBJ databases">
        <title>Complete sequence of chromosome of Jannaschia sp. CCS1.</title>
        <authorList>
            <consortium name="US DOE Joint Genome Institute"/>
            <person name="Copeland A."/>
            <person name="Lucas S."/>
            <person name="Lapidus A."/>
            <person name="Barry K."/>
            <person name="Detter J.C."/>
            <person name="Glavina del Rio T."/>
            <person name="Hammon N."/>
            <person name="Israni S."/>
            <person name="Pitluck S."/>
            <person name="Brettin T."/>
            <person name="Bruce D."/>
            <person name="Han C."/>
            <person name="Tapia R."/>
            <person name="Gilna P."/>
            <person name="Chertkov O."/>
            <person name="Saunders E."/>
            <person name="Schmutz J."/>
            <person name="Larimer F."/>
            <person name="Land M."/>
            <person name="Kyrpides N."/>
            <person name="Lykidis A."/>
            <person name="Moran M.A."/>
            <person name="Belas R."/>
            <person name="Ye W."/>
            <person name="Buchan A."/>
            <person name="Gonzalez J.M."/>
            <person name="Schell M.A."/>
            <person name="Richardson P."/>
        </authorList>
    </citation>
    <scope>NUCLEOTIDE SEQUENCE [LARGE SCALE GENOMIC DNA]</scope>
    <source>
        <strain>CCS1</strain>
    </source>
</reference>
<protein>
    <recommendedName>
        <fullName evidence="1">FMN-dependent NADH:quinone oxidoreductase 2</fullName>
        <ecNumber evidence="1">1.6.5.-</ecNumber>
    </recommendedName>
    <alternativeName>
        <fullName evidence="1">Azo-dye reductase 2</fullName>
    </alternativeName>
    <alternativeName>
        <fullName evidence="1">FMN-dependent NADH-azo compound oxidoreductase 2</fullName>
    </alternativeName>
    <alternativeName>
        <fullName evidence="1">FMN-dependent NADH-azoreductase 2</fullName>
        <ecNumber evidence="1">1.7.1.17</ecNumber>
    </alternativeName>
</protein>
<organism>
    <name type="scientific">Jannaschia sp. (strain CCS1)</name>
    <dbReference type="NCBI Taxonomy" id="290400"/>
    <lineage>
        <taxon>Bacteria</taxon>
        <taxon>Pseudomonadati</taxon>
        <taxon>Pseudomonadota</taxon>
        <taxon>Alphaproteobacteria</taxon>
        <taxon>Rhodobacterales</taxon>
        <taxon>Roseobacteraceae</taxon>
        <taxon>Jannaschia</taxon>
    </lineage>
</organism>